<proteinExistence type="inferred from homology"/>
<feature type="chain" id="PRO_1000119587" description="CDP-diacylglycerol pyrophosphatase">
    <location>
        <begin position="1"/>
        <end position="251"/>
    </location>
</feature>
<feature type="transmembrane region" description="Helical" evidence="1">
    <location>
        <begin position="4"/>
        <end position="24"/>
    </location>
</feature>
<organism>
    <name type="scientific">Escherichia coli (strain SMS-3-5 / SECEC)</name>
    <dbReference type="NCBI Taxonomy" id="439855"/>
    <lineage>
        <taxon>Bacteria</taxon>
        <taxon>Pseudomonadati</taxon>
        <taxon>Pseudomonadota</taxon>
        <taxon>Gammaproteobacteria</taxon>
        <taxon>Enterobacterales</taxon>
        <taxon>Enterobacteriaceae</taxon>
        <taxon>Escherichia</taxon>
    </lineage>
</organism>
<gene>
    <name evidence="1" type="primary">cdh</name>
    <name type="ordered locus">EcSMS35_4358</name>
</gene>
<keyword id="KW-0997">Cell inner membrane</keyword>
<keyword id="KW-1003">Cell membrane</keyword>
<keyword id="KW-0378">Hydrolase</keyword>
<keyword id="KW-0444">Lipid biosynthesis</keyword>
<keyword id="KW-0443">Lipid metabolism</keyword>
<keyword id="KW-0472">Membrane</keyword>
<keyword id="KW-0594">Phospholipid biosynthesis</keyword>
<keyword id="KW-1208">Phospholipid metabolism</keyword>
<keyword id="KW-0812">Transmembrane</keyword>
<keyword id="KW-1133">Transmembrane helix</keyword>
<evidence type="ECO:0000255" key="1">
    <source>
        <dbReference type="HAMAP-Rule" id="MF_00319"/>
    </source>
</evidence>
<name>CDH_ECOSM</name>
<reference key="1">
    <citation type="journal article" date="2008" name="J. Bacteriol.">
        <title>Insights into the environmental resistance gene pool from the genome sequence of the multidrug-resistant environmental isolate Escherichia coli SMS-3-5.</title>
        <authorList>
            <person name="Fricke W.F."/>
            <person name="Wright M.S."/>
            <person name="Lindell A.H."/>
            <person name="Harkins D.M."/>
            <person name="Baker-Austin C."/>
            <person name="Ravel J."/>
            <person name="Stepanauskas R."/>
        </authorList>
    </citation>
    <scope>NUCLEOTIDE SEQUENCE [LARGE SCALE GENOMIC DNA]</scope>
    <source>
        <strain>SMS-3-5 / SECEC</strain>
    </source>
</reference>
<sequence>MKKAGLLFLVMIVIAVVAAGIGYWKLTGEESDTLRKIVLEECLPNQQQNQNPSPCAEVKPNAGYVVLKDLNGPLQYLLMPTYRINGTESPLLTDPSTPNFFWLAWQARDFMSKKYGQPVPDRAVSLAINSRTGRTQNHFHIHISCIRPDVREQLDNNLANISSRWLPLPGGLRGHEYLARRVTESELVQRSPFMMLAEEVPEAREHMGSYGLAMVRQSDNSFVLLATQRNLLTLNRASAEEIQDHQCEILR</sequence>
<protein>
    <recommendedName>
        <fullName evidence="1">CDP-diacylglycerol pyrophosphatase</fullName>
        <ecNumber evidence="1">3.6.1.26</ecNumber>
    </recommendedName>
    <alternativeName>
        <fullName evidence="1">CDP-diacylglycerol phosphatidylhydrolase</fullName>
    </alternativeName>
    <alternativeName>
        <fullName evidence="1">CDP-diglyceride hydrolase</fullName>
    </alternativeName>
</protein>
<comment type="catalytic activity">
    <reaction evidence="1">
        <text>a CDP-1,2-diacyl-sn-glycerol + H2O = a 1,2-diacyl-sn-glycero-3-phosphate + CMP + 2 H(+)</text>
        <dbReference type="Rhea" id="RHEA:15221"/>
        <dbReference type="ChEBI" id="CHEBI:15377"/>
        <dbReference type="ChEBI" id="CHEBI:15378"/>
        <dbReference type="ChEBI" id="CHEBI:58332"/>
        <dbReference type="ChEBI" id="CHEBI:58608"/>
        <dbReference type="ChEBI" id="CHEBI:60377"/>
        <dbReference type="EC" id="3.6.1.26"/>
    </reaction>
</comment>
<comment type="pathway">
    <text evidence="1">Phospholipid metabolism; CDP-diacylglycerol degradation; phosphatidate from CDP-diacylglycerol: step 1/1.</text>
</comment>
<comment type="subcellular location">
    <subcellularLocation>
        <location evidence="1">Cell inner membrane</location>
        <topology evidence="1">Single-pass membrane protein</topology>
    </subcellularLocation>
</comment>
<comment type="similarity">
    <text evidence="1">Belongs to the Cdh family.</text>
</comment>
<dbReference type="EC" id="3.6.1.26" evidence="1"/>
<dbReference type="EMBL" id="CP000970">
    <property type="protein sequence ID" value="ACB15759.1"/>
    <property type="molecule type" value="Genomic_DNA"/>
</dbReference>
<dbReference type="RefSeq" id="WP_000708998.1">
    <property type="nucleotide sequence ID" value="NC_010498.1"/>
</dbReference>
<dbReference type="SMR" id="B1LNM1"/>
<dbReference type="GeneID" id="93777980"/>
<dbReference type="KEGG" id="ecm:EcSMS35_4358"/>
<dbReference type="HOGENOM" id="CLU_077117_0_1_6"/>
<dbReference type="UniPathway" id="UPA00609">
    <property type="reaction ID" value="UER00664"/>
</dbReference>
<dbReference type="Proteomes" id="UP000007011">
    <property type="component" value="Chromosome"/>
</dbReference>
<dbReference type="GO" id="GO:0005886">
    <property type="term" value="C:plasma membrane"/>
    <property type="evidence" value="ECO:0007669"/>
    <property type="project" value="UniProtKB-SubCell"/>
</dbReference>
<dbReference type="GO" id="GO:0008715">
    <property type="term" value="F:CDP-diacylglycerol diphosphatase activity"/>
    <property type="evidence" value="ECO:0007669"/>
    <property type="project" value="UniProtKB-UniRule"/>
</dbReference>
<dbReference type="GO" id="GO:0046342">
    <property type="term" value="P:CDP-diacylglycerol catabolic process"/>
    <property type="evidence" value="ECO:0007669"/>
    <property type="project" value="UniProtKB-UniRule"/>
</dbReference>
<dbReference type="GO" id="GO:0008654">
    <property type="term" value="P:phospholipid biosynthetic process"/>
    <property type="evidence" value="ECO:0007669"/>
    <property type="project" value="UniProtKB-KW"/>
</dbReference>
<dbReference type="FunFam" id="3.30.428.30:FF:000001">
    <property type="entry name" value="CDP-diacylglycerol pyrophosphatase"/>
    <property type="match status" value="1"/>
</dbReference>
<dbReference type="Gene3D" id="3.30.428.30">
    <property type="entry name" value="HIT family - CDH-like"/>
    <property type="match status" value="1"/>
</dbReference>
<dbReference type="HAMAP" id="MF_00319">
    <property type="entry name" value="Cdh"/>
    <property type="match status" value="1"/>
</dbReference>
<dbReference type="InterPro" id="IPR003763">
    <property type="entry name" value="CDP-diacylglyc_Pase"/>
</dbReference>
<dbReference type="InterPro" id="IPR015993">
    <property type="entry name" value="CDP-diacylglyc_Pase_proteobac"/>
</dbReference>
<dbReference type="InterPro" id="IPR036265">
    <property type="entry name" value="HIT-like_sf"/>
</dbReference>
<dbReference type="NCBIfam" id="TIGR00672">
    <property type="entry name" value="cdh"/>
    <property type="match status" value="1"/>
</dbReference>
<dbReference type="NCBIfam" id="NF003986">
    <property type="entry name" value="PRK05471.1-5"/>
    <property type="match status" value="1"/>
</dbReference>
<dbReference type="NCBIfam" id="NF003987">
    <property type="entry name" value="PRK05471.1-6"/>
    <property type="match status" value="1"/>
</dbReference>
<dbReference type="Pfam" id="PF02611">
    <property type="entry name" value="CDH"/>
    <property type="match status" value="1"/>
</dbReference>
<dbReference type="PIRSF" id="PIRSF001273">
    <property type="entry name" value="CDH"/>
    <property type="match status" value="1"/>
</dbReference>
<dbReference type="SUPFAM" id="SSF54197">
    <property type="entry name" value="HIT-like"/>
    <property type="match status" value="1"/>
</dbReference>
<accession>B1LNM1</accession>